<feature type="chain" id="PRO_0000143124" description="Bestrophin homolog 1">
    <location>
        <begin position="1"/>
        <end position="450"/>
    </location>
</feature>
<feature type="topological domain" description="Cytoplasmic" evidence="1">
    <location>
        <begin position="1"/>
        <end position="31"/>
    </location>
</feature>
<feature type="transmembrane region" description="Helical" evidence="1">
    <location>
        <begin position="32"/>
        <end position="51"/>
    </location>
</feature>
<feature type="topological domain" description="Extracellular" evidence="1">
    <location>
        <begin position="52"/>
        <end position="60"/>
    </location>
</feature>
<feature type="transmembrane region" description="Helical" evidence="1">
    <location>
        <begin position="61"/>
        <end position="82"/>
    </location>
</feature>
<feature type="topological domain" description="Cytoplasmic" evidence="1">
    <location>
        <begin position="83"/>
        <end position="242"/>
    </location>
</feature>
<feature type="transmembrane region" description="Helical" evidence="1">
    <location>
        <begin position="243"/>
        <end position="260"/>
    </location>
</feature>
<feature type="topological domain" description="Extracellular" evidence="1">
    <location>
        <begin position="261"/>
        <end position="278"/>
    </location>
</feature>
<feature type="transmembrane region" description="Helical" evidence="1">
    <location>
        <begin position="279"/>
        <end position="292"/>
    </location>
</feature>
<feature type="topological domain" description="Cytoplasmic" evidence="1">
    <location>
        <begin position="293"/>
        <end position="450"/>
    </location>
</feature>
<feature type="binding site" evidence="1">
    <location>
        <position position="300"/>
    </location>
    <ligand>
        <name>Ca(2+)</name>
        <dbReference type="ChEBI" id="CHEBI:29108"/>
        <note>ligand shared between two neighboring subunits</note>
    </ligand>
</feature>
<feature type="binding site" evidence="1">
    <location>
        <position position="305"/>
    </location>
    <ligand>
        <name>Ca(2+)</name>
        <dbReference type="ChEBI" id="CHEBI:29108"/>
        <note>ligand shared between two neighboring subunits</note>
    </ligand>
</feature>
<feature type="binding site" evidence="1">
    <location>
        <position position="308"/>
    </location>
    <ligand>
        <name>Ca(2+)</name>
        <dbReference type="ChEBI" id="CHEBI:29108"/>
        <note>ligand shared between two neighboring subunits</note>
    </ligand>
</feature>
<name>BEST1_CAEEL</name>
<proteinExistence type="evidence at protein level"/>
<reference key="1">
    <citation type="journal article" date="1998" name="Science">
        <title>Genome sequence of the nematode C. elegans: a platform for investigating biology.</title>
        <authorList>
            <consortium name="The C. elegans sequencing consortium"/>
        </authorList>
    </citation>
    <scope>NUCLEOTIDE SEQUENCE [LARGE SCALE GENOMIC DNA]</scope>
    <source>
        <strain>Bristol N2</strain>
    </source>
</reference>
<reference key="2">
    <citation type="journal article" date="2002" name="Proc. Natl. Acad. Sci. U.S.A.">
        <title>The vitelliform macular dystrophy protein defines a new family of chloride channels.</title>
        <authorList>
            <person name="Sun H."/>
            <person name="Tsunenari T."/>
            <person name="Yau K.-W."/>
            <person name="Nathans J."/>
        </authorList>
    </citation>
    <scope>FUNCTION</scope>
    <scope>TRANSPORTER ACTIVITY</scope>
    <scope>SUBUNIT</scope>
</reference>
<protein>
    <recommendedName>
        <fullName>Bestrophin homolog 1</fullName>
    </recommendedName>
</protein>
<organism>
    <name type="scientific">Caenorhabditis elegans</name>
    <dbReference type="NCBI Taxonomy" id="6239"/>
    <lineage>
        <taxon>Eukaryota</taxon>
        <taxon>Metazoa</taxon>
        <taxon>Ecdysozoa</taxon>
        <taxon>Nematoda</taxon>
        <taxon>Chromadorea</taxon>
        <taxon>Rhabditida</taxon>
        <taxon>Rhabditina</taxon>
        <taxon>Rhabditomorpha</taxon>
        <taxon>Rhabditoidea</taxon>
        <taxon>Rhabditidae</taxon>
        <taxon>Peloderinae</taxon>
        <taxon>Caenorhabditis</taxon>
    </lineage>
</organism>
<comment type="function">
    <text evidence="2">Ligand-gated anion channel that allows the movement of chloride monoatomic anions across cell membranes when activated by Calcium (Ca2+).</text>
</comment>
<comment type="catalytic activity">
    <reaction evidence="2">
        <text>chloride(in) = chloride(out)</text>
        <dbReference type="Rhea" id="RHEA:29823"/>
        <dbReference type="ChEBI" id="CHEBI:17996"/>
    </reaction>
</comment>
<comment type="subunit">
    <text evidence="2">Forms oligomers.</text>
</comment>
<comment type="subcellular location">
    <subcellularLocation>
        <location evidence="1">Cell membrane</location>
        <topology evidence="1">Multi-pass membrane protein</topology>
    </subcellularLocation>
</comment>
<comment type="similarity">
    <text evidence="3">Belongs to the anion channel-forming bestrophin (TC 1.A.46) family. Calcium-sensitive chloride channel subfamily.</text>
</comment>
<sequence>MTINYHKEIMTSHPWTFFLLLFKWKGSIWKAVYMETIIFLICYGIISVIYKTAMGESSQRTFESLVRYFDKRLSYIPLEFVLGFFVTTVVNRWTKLYQTIGFIDNVGLMANCYIRGATEKARIYRRNIMRYCELVQILVFRDMSMRTRRRFPTMETVVAAGFMNKHELELYNSYDTKYNSKLGTKYWIPANWALCMTYKARKDGYIESDYFKAQMEGEIRTWRTNIEWVCNYDWVPLPLMYPQLVCLAVNLYFLVSIIARQLVIEKHKMVDEVDVYFPVMTFLQFIFYMGWLKVIDVMLNPFGEDDDDFETNALIDRNITMGLMIADNPMSTPELRKDPFYDEVDVPLLYSEESSNIPNHHYHGSVSEVRLEQKGNAPVMMMPHSQSAANLRRMMSFKSVDEDEKDINAFSMSHDDARMRNWREVSLDSSFLADLNENKEWKIPTNPQKF</sequence>
<dbReference type="EMBL" id="Z73422">
    <property type="protein sequence ID" value="CAA97765.1"/>
    <property type="molecule type" value="Genomic_DNA"/>
</dbReference>
<dbReference type="PIR" id="T18781">
    <property type="entry name" value="T18781"/>
</dbReference>
<dbReference type="RefSeq" id="NP_502523.1">
    <property type="nucleotide sequence ID" value="NM_070122.8"/>
</dbReference>
<dbReference type="SMR" id="Q17528"/>
<dbReference type="FunCoup" id="Q17528">
    <property type="interactions" value="615"/>
</dbReference>
<dbReference type="STRING" id="6239.B0564.3.2"/>
<dbReference type="PaxDb" id="6239-B0564.3.1"/>
<dbReference type="EnsemblMetazoa" id="B0564.3.1">
    <property type="protein sequence ID" value="B0564.3.1"/>
    <property type="gene ID" value="WBGene00007203"/>
</dbReference>
<dbReference type="GeneID" id="178264"/>
<dbReference type="KEGG" id="cel:CELE_B0564.3"/>
<dbReference type="UCSC" id="B0564.3.1">
    <property type="organism name" value="c. elegans"/>
</dbReference>
<dbReference type="AGR" id="WB:WBGene00007203"/>
<dbReference type="CTD" id="178264"/>
<dbReference type="WormBase" id="B0564.3">
    <property type="protein sequence ID" value="CE05177"/>
    <property type="gene ID" value="WBGene00007203"/>
    <property type="gene designation" value="best-1"/>
</dbReference>
<dbReference type="eggNOG" id="KOG3547">
    <property type="taxonomic scope" value="Eukaryota"/>
</dbReference>
<dbReference type="GeneTree" id="ENSGT00970000196575"/>
<dbReference type="HOGENOM" id="CLU_018069_7_1_1"/>
<dbReference type="InParanoid" id="Q17528"/>
<dbReference type="OMA" id="RYCELVQ"/>
<dbReference type="OrthoDB" id="201595at2759"/>
<dbReference type="PhylomeDB" id="Q17528"/>
<dbReference type="PRO" id="PR:Q17528"/>
<dbReference type="Proteomes" id="UP000001940">
    <property type="component" value="Chromosome IV"/>
</dbReference>
<dbReference type="Bgee" id="WBGene00007203">
    <property type="expression patterns" value="Expressed in larva and 2 other cell types or tissues"/>
</dbReference>
<dbReference type="GO" id="GO:0034707">
    <property type="term" value="C:chloride channel complex"/>
    <property type="evidence" value="ECO:0007669"/>
    <property type="project" value="UniProtKB-KW"/>
</dbReference>
<dbReference type="GO" id="GO:0098857">
    <property type="term" value="C:membrane microdomain"/>
    <property type="evidence" value="ECO:0000250"/>
    <property type="project" value="UniProtKB"/>
</dbReference>
<dbReference type="GO" id="GO:0005886">
    <property type="term" value="C:plasma membrane"/>
    <property type="evidence" value="ECO:0000250"/>
    <property type="project" value="UniProtKB"/>
</dbReference>
<dbReference type="GO" id="GO:0098793">
    <property type="term" value="C:presynapse"/>
    <property type="evidence" value="ECO:0007669"/>
    <property type="project" value="GOC"/>
</dbReference>
<dbReference type="GO" id="GO:0160133">
    <property type="term" value="F:bicarbonate channel activity"/>
    <property type="evidence" value="ECO:0000250"/>
    <property type="project" value="UniProtKB"/>
</dbReference>
<dbReference type="GO" id="GO:0005254">
    <property type="term" value="F:chloride channel activity"/>
    <property type="evidence" value="ECO:0000318"/>
    <property type="project" value="GO_Central"/>
</dbReference>
<dbReference type="GO" id="GO:0005229">
    <property type="term" value="F:intracellularly calcium-gated chloride channel activity"/>
    <property type="evidence" value="ECO:0000250"/>
    <property type="project" value="UniProtKB"/>
</dbReference>
<dbReference type="GO" id="GO:0022834">
    <property type="term" value="F:ligand-gated channel activity"/>
    <property type="evidence" value="ECO:0000250"/>
    <property type="project" value="UniProtKB"/>
</dbReference>
<dbReference type="GO" id="GO:0046872">
    <property type="term" value="F:metal ion binding"/>
    <property type="evidence" value="ECO:0007669"/>
    <property type="project" value="UniProtKB-KW"/>
</dbReference>
<dbReference type="GO" id="GO:0061534">
    <property type="term" value="P:gamma-aminobutyric acid secretion, neurotransmission"/>
    <property type="evidence" value="ECO:0000250"/>
    <property type="project" value="UniProtKB"/>
</dbReference>
<dbReference type="GO" id="GO:0014047">
    <property type="term" value="P:glutamate secretion"/>
    <property type="evidence" value="ECO:0000250"/>
    <property type="project" value="UniProtKB"/>
</dbReference>
<dbReference type="GO" id="GO:0051259">
    <property type="term" value="P:protein complex oligomerization"/>
    <property type="evidence" value="ECO:0000250"/>
    <property type="project" value="UniProtKB"/>
</dbReference>
<dbReference type="GO" id="GO:0048167">
    <property type="term" value="P:regulation of synaptic plasticity"/>
    <property type="evidence" value="ECO:0000250"/>
    <property type="project" value="UniProtKB"/>
</dbReference>
<dbReference type="InterPro" id="IPR000615">
    <property type="entry name" value="Bestrophin"/>
</dbReference>
<dbReference type="InterPro" id="IPR021134">
    <property type="entry name" value="Bestrophin-like"/>
</dbReference>
<dbReference type="PANTHER" id="PTHR10736">
    <property type="entry name" value="BESTROPHIN"/>
    <property type="match status" value="1"/>
</dbReference>
<dbReference type="PANTHER" id="PTHR10736:SF9">
    <property type="entry name" value="BESTROPHIN HOMOLOG 1-RELATED"/>
    <property type="match status" value="1"/>
</dbReference>
<dbReference type="Pfam" id="PF01062">
    <property type="entry name" value="Bestrophin"/>
    <property type="match status" value="1"/>
</dbReference>
<accession>Q17528</accession>
<gene>
    <name type="primary">best-1</name>
    <name type="ORF">B0564.3</name>
</gene>
<keyword id="KW-0106">Calcium</keyword>
<keyword id="KW-1003">Cell membrane</keyword>
<keyword id="KW-0868">Chloride</keyword>
<keyword id="KW-0869">Chloride channel</keyword>
<keyword id="KW-0407">Ion channel</keyword>
<keyword id="KW-0406">Ion transport</keyword>
<keyword id="KW-0472">Membrane</keyword>
<keyword id="KW-0479">Metal-binding</keyword>
<keyword id="KW-1185">Reference proteome</keyword>
<keyword id="KW-0812">Transmembrane</keyword>
<keyword id="KW-1133">Transmembrane helix</keyword>
<keyword id="KW-0813">Transport</keyword>
<evidence type="ECO:0000250" key="1">
    <source>
        <dbReference type="UniProtKB" id="O76090"/>
    </source>
</evidence>
<evidence type="ECO:0000269" key="2">
    <source>
    </source>
</evidence>
<evidence type="ECO:0000305" key="3"/>